<protein>
    <recommendedName>
        <fullName>Putative leucine-rich repeat receptor-like serine/threonine-protein kinase At2g19230</fullName>
        <ecNumber>2.7.11.1</ecNumber>
    </recommendedName>
</protein>
<gene>
    <name type="ordered locus">At2g19230</name>
    <name type="ORF">F27F23.3</name>
</gene>
<sequence length="877" mass="99011">MGNFNFLPLVSFASFVVVLVLVCAQDQSGFVSIDCGIPEDSSYYDEKTDIKYISDAAFVESGTIHSIDSKFQKKNLEKQFQKVRSFPEGKKNCYDVQPPQGKGFKYLIRTRFMYGNYDNLGKAPDFDLYLGVNLWDSVTLENSTTIVTKEIIYTLRSDKVHVCLVDKERGTPFLSVLELRLLKNNIYETASDSLMLYRRWDLGATGDLPARYKDDIFDRFWMPLMFPNFLILNTSLMIDPTSSNGFLPPSVVMSTAVAPMNSSIEQIMVYWEPRDPNWKFYIYIHFAEVEKLPSNETREFSVFLNKEQIDTTSVFRPSYLYTDTLYVQNPVSGPFLEFVLRQGVKSTRPPIMNAIETYRTNEFLDLPTDQNDVDAIMKIKTKYKVKKNWLGDPCAPFGYPWQGINCSYTANNPPRIISVNLSFSGLTGQIDPVFITLTPLQKLDLSNNRLTGTVPDFLANLPDLTELNLEENKLTGILPEKLLERSKDGSLSLRVGGNPDLCVSDSCRNKKTERKEYIIPSVASVTGLFFLLLALISFWQFKKRQQSVKTGPLDTKRYYKYSEIVEITNNFERVLGQGGFGKVYYGVLRGEQVAIKMLSKSSAQGYKEFRAEVELLLRVHHKNLIALIGYCHEGDQMALIYEYIGNGTLGDYLSGKNSSILSWEERLQISLDAAQGLEYLHNGCKPPIVHRDVKPTNILINEKLQAKIADFGLSRSFTLEGDSQVSTEVAGTIGYLDPEHYSMQQFSEKSDVYSFGVVLLEVITGQPVISRSRTEENRHISDRVSLMLSKGDIKSIVDPKLGERFNAGLAWKITEVALACASESTKTRLTMSQVVAELKESLCRARTSGDSGDISFSEPTEMNVSMTVDPGVLPQPR</sequence>
<dbReference type="EC" id="2.7.11.1"/>
<dbReference type="EMBL" id="AC003058">
    <property type="protein sequence ID" value="AAC16453.1"/>
    <property type="molecule type" value="Genomic_DNA"/>
</dbReference>
<dbReference type="EMBL" id="CP002685">
    <property type="protein sequence ID" value="AEC06859.1"/>
    <property type="status" value="ALT_SEQ"/>
    <property type="molecule type" value="Genomic_DNA"/>
</dbReference>
<dbReference type="EMBL" id="CP002685">
    <property type="protein sequence ID" value="ANM63021.1"/>
    <property type="molecule type" value="Genomic_DNA"/>
</dbReference>
<dbReference type="PIR" id="T01271">
    <property type="entry name" value="T01271"/>
</dbReference>
<dbReference type="RefSeq" id="NP_001325138.1">
    <property type="nucleotide sequence ID" value="NM_001335627.1"/>
</dbReference>
<dbReference type="RefSeq" id="NP_179513.4">
    <property type="nucleotide sequence ID" value="NM_127480.4"/>
</dbReference>
<dbReference type="SMR" id="O64556"/>
<dbReference type="BioGRID" id="1797">
    <property type="interactions" value="33"/>
</dbReference>
<dbReference type="FunCoup" id="O64556">
    <property type="interactions" value="1"/>
</dbReference>
<dbReference type="IntAct" id="O64556">
    <property type="interactions" value="36"/>
</dbReference>
<dbReference type="STRING" id="3702.O64556"/>
<dbReference type="GlyGen" id="O64556">
    <property type="glycosylation" value="6 sites"/>
</dbReference>
<dbReference type="iPTMnet" id="O64556"/>
<dbReference type="PaxDb" id="3702-AT2G19230.1"/>
<dbReference type="ProteomicsDB" id="232355"/>
<dbReference type="EnsemblPlants" id="AT2G19230.2">
    <property type="protein sequence ID" value="AT2G19230.2"/>
    <property type="gene ID" value="AT2G19230"/>
</dbReference>
<dbReference type="GeneID" id="816440"/>
<dbReference type="Gramene" id="AT2G19230.2">
    <property type="protein sequence ID" value="AT2G19230.2"/>
    <property type="gene ID" value="AT2G19230"/>
</dbReference>
<dbReference type="KEGG" id="ath:AT2G19230"/>
<dbReference type="Araport" id="AT2G19230"/>
<dbReference type="TAIR" id="AT2G19230"/>
<dbReference type="eggNOG" id="KOG1091">
    <property type="taxonomic scope" value="Eukaryota"/>
</dbReference>
<dbReference type="HOGENOM" id="CLU_000288_41_1_1"/>
<dbReference type="InParanoid" id="O64556"/>
<dbReference type="OMA" id="CYEGAYM"/>
<dbReference type="PhylomeDB" id="O64556"/>
<dbReference type="PRO" id="PR:O64556"/>
<dbReference type="Proteomes" id="UP000006548">
    <property type="component" value="Chromosome 2"/>
</dbReference>
<dbReference type="GO" id="GO:0005886">
    <property type="term" value="C:plasma membrane"/>
    <property type="evidence" value="ECO:0007669"/>
    <property type="project" value="UniProtKB-SubCell"/>
</dbReference>
<dbReference type="GO" id="GO:0005524">
    <property type="term" value="F:ATP binding"/>
    <property type="evidence" value="ECO:0007669"/>
    <property type="project" value="UniProtKB-KW"/>
</dbReference>
<dbReference type="GO" id="GO:0106310">
    <property type="term" value="F:protein serine kinase activity"/>
    <property type="evidence" value="ECO:0007669"/>
    <property type="project" value="RHEA"/>
</dbReference>
<dbReference type="GO" id="GO:0004674">
    <property type="term" value="F:protein serine/threonine kinase activity"/>
    <property type="evidence" value="ECO:0007669"/>
    <property type="project" value="UniProtKB-KW"/>
</dbReference>
<dbReference type="CDD" id="cd14066">
    <property type="entry name" value="STKc_IRAK"/>
    <property type="match status" value="1"/>
</dbReference>
<dbReference type="FunFam" id="3.80.10.10:FF:000129">
    <property type="entry name" value="Leucine-rich repeat receptor-like kinase"/>
    <property type="match status" value="1"/>
</dbReference>
<dbReference type="FunFam" id="3.30.200.20:FF:000394">
    <property type="entry name" value="Leucine-rich repeat receptor-like protein kinase"/>
    <property type="match status" value="1"/>
</dbReference>
<dbReference type="FunFam" id="1.10.510.10:FF:000146">
    <property type="entry name" value="LRR receptor-like serine/threonine-protein kinase IOS1"/>
    <property type="match status" value="1"/>
</dbReference>
<dbReference type="Gene3D" id="3.30.200.20">
    <property type="entry name" value="Phosphorylase Kinase, domain 1"/>
    <property type="match status" value="1"/>
</dbReference>
<dbReference type="Gene3D" id="3.80.10.10">
    <property type="entry name" value="Ribonuclease Inhibitor"/>
    <property type="match status" value="1"/>
</dbReference>
<dbReference type="Gene3D" id="1.10.510.10">
    <property type="entry name" value="Transferase(Phosphotransferase) domain 1"/>
    <property type="match status" value="1"/>
</dbReference>
<dbReference type="InterPro" id="IPR011009">
    <property type="entry name" value="Kinase-like_dom_sf"/>
</dbReference>
<dbReference type="InterPro" id="IPR001611">
    <property type="entry name" value="Leu-rich_rpt"/>
</dbReference>
<dbReference type="InterPro" id="IPR032675">
    <property type="entry name" value="LRR_dom_sf"/>
</dbReference>
<dbReference type="InterPro" id="IPR024788">
    <property type="entry name" value="Malectin-like_Carb-bd_dom"/>
</dbReference>
<dbReference type="InterPro" id="IPR000719">
    <property type="entry name" value="Prot_kinase_dom"/>
</dbReference>
<dbReference type="InterPro" id="IPR017441">
    <property type="entry name" value="Protein_kinase_ATP_BS"/>
</dbReference>
<dbReference type="InterPro" id="IPR008271">
    <property type="entry name" value="Ser/Thr_kinase_AS"/>
</dbReference>
<dbReference type="PANTHER" id="PTHR45631">
    <property type="entry name" value="OS07G0107800 PROTEIN-RELATED"/>
    <property type="match status" value="1"/>
</dbReference>
<dbReference type="PANTHER" id="PTHR45631:SF160">
    <property type="entry name" value="PROTEIN KINASE DOMAIN-CONTAINING PROTEIN"/>
    <property type="match status" value="1"/>
</dbReference>
<dbReference type="Pfam" id="PF13855">
    <property type="entry name" value="LRR_8"/>
    <property type="match status" value="1"/>
</dbReference>
<dbReference type="Pfam" id="PF12819">
    <property type="entry name" value="Malectin_like"/>
    <property type="match status" value="1"/>
</dbReference>
<dbReference type="Pfam" id="PF00069">
    <property type="entry name" value="Pkinase"/>
    <property type="match status" value="1"/>
</dbReference>
<dbReference type="PRINTS" id="PR00019">
    <property type="entry name" value="LEURICHRPT"/>
</dbReference>
<dbReference type="SMART" id="SM00220">
    <property type="entry name" value="S_TKc"/>
    <property type="match status" value="1"/>
</dbReference>
<dbReference type="SUPFAM" id="SSF52058">
    <property type="entry name" value="L domain-like"/>
    <property type="match status" value="1"/>
</dbReference>
<dbReference type="SUPFAM" id="SSF56112">
    <property type="entry name" value="Protein kinase-like (PK-like)"/>
    <property type="match status" value="1"/>
</dbReference>
<dbReference type="PROSITE" id="PS00107">
    <property type="entry name" value="PROTEIN_KINASE_ATP"/>
    <property type="match status" value="1"/>
</dbReference>
<dbReference type="PROSITE" id="PS50011">
    <property type="entry name" value="PROTEIN_KINASE_DOM"/>
    <property type="match status" value="1"/>
</dbReference>
<dbReference type="PROSITE" id="PS00108">
    <property type="entry name" value="PROTEIN_KINASE_ST"/>
    <property type="match status" value="1"/>
</dbReference>
<reference key="1">
    <citation type="journal article" date="1999" name="Nature">
        <title>Sequence and analysis of chromosome 2 of the plant Arabidopsis thaliana.</title>
        <authorList>
            <person name="Lin X."/>
            <person name="Kaul S."/>
            <person name="Rounsley S.D."/>
            <person name="Shea T.P."/>
            <person name="Benito M.-I."/>
            <person name="Town C.D."/>
            <person name="Fujii C.Y."/>
            <person name="Mason T.M."/>
            <person name="Bowman C.L."/>
            <person name="Barnstead M.E."/>
            <person name="Feldblyum T.V."/>
            <person name="Buell C.R."/>
            <person name="Ketchum K.A."/>
            <person name="Lee J.J."/>
            <person name="Ronning C.M."/>
            <person name="Koo H.L."/>
            <person name="Moffat K.S."/>
            <person name="Cronin L.A."/>
            <person name="Shen M."/>
            <person name="Pai G."/>
            <person name="Van Aken S."/>
            <person name="Umayam L."/>
            <person name="Tallon L.J."/>
            <person name="Gill J.E."/>
            <person name="Adams M.D."/>
            <person name="Carrera A.J."/>
            <person name="Creasy T.H."/>
            <person name="Goodman H.M."/>
            <person name="Somerville C.R."/>
            <person name="Copenhaver G.P."/>
            <person name="Preuss D."/>
            <person name="Nierman W.C."/>
            <person name="White O."/>
            <person name="Eisen J.A."/>
            <person name="Salzberg S.L."/>
            <person name="Fraser C.M."/>
            <person name="Venter J.C."/>
        </authorList>
    </citation>
    <scope>NUCLEOTIDE SEQUENCE [LARGE SCALE GENOMIC DNA]</scope>
    <source>
        <strain>cv. Columbia</strain>
    </source>
</reference>
<reference key="2">
    <citation type="journal article" date="2017" name="Plant J.">
        <title>Araport11: a complete reannotation of the Arabidopsis thaliana reference genome.</title>
        <authorList>
            <person name="Cheng C.Y."/>
            <person name="Krishnakumar V."/>
            <person name="Chan A.P."/>
            <person name="Thibaud-Nissen F."/>
            <person name="Schobel S."/>
            <person name="Town C.D."/>
        </authorList>
    </citation>
    <scope>GENOME REANNOTATION</scope>
    <source>
        <strain>cv. Columbia</strain>
    </source>
</reference>
<accession>O64556</accession>
<accession>F4ISF9</accession>
<keyword id="KW-0067">ATP-binding</keyword>
<keyword id="KW-1003">Cell membrane</keyword>
<keyword id="KW-0325">Glycoprotein</keyword>
<keyword id="KW-0418">Kinase</keyword>
<keyword id="KW-0433">Leucine-rich repeat</keyword>
<keyword id="KW-0472">Membrane</keyword>
<keyword id="KW-0547">Nucleotide-binding</keyword>
<keyword id="KW-0597">Phosphoprotein</keyword>
<keyword id="KW-0675">Receptor</keyword>
<keyword id="KW-1185">Reference proteome</keyword>
<keyword id="KW-0677">Repeat</keyword>
<keyword id="KW-0723">Serine/threonine-protein kinase</keyword>
<keyword id="KW-0732">Signal</keyword>
<keyword id="KW-0808">Transferase</keyword>
<keyword id="KW-0812">Transmembrane</keyword>
<keyword id="KW-1133">Transmembrane helix</keyword>
<proteinExistence type="evidence at protein level"/>
<organism>
    <name type="scientific">Arabidopsis thaliana</name>
    <name type="common">Mouse-ear cress</name>
    <dbReference type="NCBI Taxonomy" id="3702"/>
    <lineage>
        <taxon>Eukaryota</taxon>
        <taxon>Viridiplantae</taxon>
        <taxon>Streptophyta</taxon>
        <taxon>Embryophyta</taxon>
        <taxon>Tracheophyta</taxon>
        <taxon>Spermatophyta</taxon>
        <taxon>Magnoliopsida</taxon>
        <taxon>eudicotyledons</taxon>
        <taxon>Gunneridae</taxon>
        <taxon>Pentapetalae</taxon>
        <taxon>rosids</taxon>
        <taxon>malvids</taxon>
        <taxon>Brassicales</taxon>
        <taxon>Brassicaceae</taxon>
        <taxon>Camelineae</taxon>
        <taxon>Arabidopsis</taxon>
    </lineage>
</organism>
<name>Y2923_ARATH</name>
<comment type="catalytic activity">
    <reaction>
        <text>L-seryl-[protein] + ATP = O-phospho-L-seryl-[protein] + ADP + H(+)</text>
        <dbReference type="Rhea" id="RHEA:17989"/>
        <dbReference type="Rhea" id="RHEA-COMP:9863"/>
        <dbReference type="Rhea" id="RHEA-COMP:11604"/>
        <dbReference type="ChEBI" id="CHEBI:15378"/>
        <dbReference type="ChEBI" id="CHEBI:29999"/>
        <dbReference type="ChEBI" id="CHEBI:30616"/>
        <dbReference type="ChEBI" id="CHEBI:83421"/>
        <dbReference type="ChEBI" id="CHEBI:456216"/>
        <dbReference type="EC" id="2.7.11.1"/>
    </reaction>
</comment>
<comment type="catalytic activity">
    <reaction>
        <text>L-threonyl-[protein] + ATP = O-phospho-L-threonyl-[protein] + ADP + H(+)</text>
        <dbReference type="Rhea" id="RHEA:46608"/>
        <dbReference type="Rhea" id="RHEA-COMP:11060"/>
        <dbReference type="Rhea" id="RHEA-COMP:11605"/>
        <dbReference type="ChEBI" id="CHEBI:15378"/>
        <dbReference type="ChEBI" id="CHEBI:30013"/>
        <dbReference type="ChEBI" id="CHEBI:30616"/>
        <dbReference type="ChEBI" id="CHEBI:61977"/>
        <dbReference type="ChEBI" id="CHEBI:456216"/>
        <dbReference type="EC" id="2.7.11.1"/>
    </reaction>
</comment>
<comment type="interaction">
    <interactant intactId="EBI-20662335">
        <id>O64556</id>
    </interactant>
    <interactant intactId="EBI-20654045">
        <id>A0A1I9LQ53</id>
        <label>At3g50230</label>
    </interactant>
    <organismsDiffer>false</organismsDiffer>
    <experiments>2</experiments>
</comment>
<comment type="interaction">
    <interactant intactId="EBI-20662335">
        <id>O64556</id>
    </interactant>
    <interactant intactId="EBI-20654730">
        <id>Q9FK10</id>
        <label>At5g53320</label>
    </interactant>
    <organismsDiffer>false</organismsDiffer>
    <experiments>4</experiments>
</comment>
<comment type="interaction">
    <interactant intactId="EBI-20662335">
        <id>O64556</id>
    </interactant>
    <interactant intactId="EBI-1626936">
        <id>Q9LVI6</id>
        <label>RLK902</label>
    </interactant>
    <organismsDiffer>false</organismsDiffer>
    <experiments>4</experiments>
</comment>
<comment type="subcellular location">
    <subcellularLocation>
        <location evidence="1">Cell membrane</location>
        <topology evidence="1">Single-pass type I membrane protein</topology>
    </subcellularLocation>
</comment>
<comment type="similarity">
    <text evidence="4">Belongs to the protein kinase superfamily. Ser/Thr protein kinase family.</text>
</comment>
<comment type="sequence caution" evidence="6">
    <conflict type="erroneous gene model prediction">
        <sequence resource="EMBL-CDS" id="AEC06859"/>
    </conflict>
</comment>
<evidence type="ECO:0000250" key="1"/>
<evidence type="ECO:0000250" key="2">
    <source>
        <dbReference type="UniProtKB" id="O48814"/>
    </source>
</evidence>
<evidence type="ECO:0000255" key="3"/>
<evidence type="ECO:0000255" key="4">
    <source>
        <dbReference type="PROSITE-ProRule" id="PRU00159"/>
    </source>
</evidence>
<evidence type="ECO:0000255" key="5">
    <source>
        <dbReference type="PROSITE-ProRule" id="PRU10027"/>
    </source>
</evidence>
<evidence type="ECO:0000305" key="6"/>
<feature type="signal peptide" evidence="3">
    <location>
        <begin position="1"/>
        <end position="24"/>
    </location>
</feature>
<feature type="chain" id="PRO_0000403340" description="Putative leucine-rich repeat receptor-like serine/threonine-protein kinase At2g19230">
    <location>
        <begin position="25"/>
        <end position="877"/>
    </location>
</feature>
<feature type="topological domain" description="Extracellular" evidence="3">
    <location>
        <begin position="25"/>
        <end position="517"/>
    </location>
</feature>
<feature type="transmembrane region" description="Helical" evidence="3">
    <location>
        <begin position="518"/>
        <end position="538"/>
    </location>
</feature>
<feature type="topological domain" description="Cytoplasmic" evidence="3">
    <location>
        <begin position="539"/>
        <end position="877"/>
    </location>
</feature>
<feature type="repeat" description="LRR 1">
    <location>
        <begin position="439"/>
        <end position="462"/>
    </location>
</feature>
<feature type="repeat" description="LRR 2">
    <location>
        <begin position="463"/>
        <end position="484"/>
    </location>
</feature>
<feature type="domain" description="Protein kinase" evidence="4">
    <location>
        <begin position="569"/>
        <end position="842"/>
    </location>
</feature>
<feature type="active site" description="Proton acceptor" evidence="4 5">
    <location>
        <position position="692"/>
    </location>
</feature>
<feature type="binding site" evidence="4">
    <location>
        <begin position="575"/>
        <end position="583"/>
    </location>
    <ligand>
        <name>ATP</name>
        <dbReference type="ChEBI" id="CHEBI:30616"/>
    </ligand>
</feature>
<feature type="binding site" evidence="4">
    <location>
        <position position="596"/>
    </location>
    <ligand>
        <name>ATP</name>
        <dbReference type="ChEBI" id="CHEBI:30616"/>
    </ligand>
</feature>
<feature type="modified residue" description="Phosphotyrosine" evidence="2">
    <location>
        <position position="641"/>
    </location>
</feature>
<feature type="modified residue" description="Phosphoserine" evidence="2">
    <location>
        <position position="726"/>
    </location>
</feature>
<feature type="modified residue" description="Phosphothreonine" evidence="2">
    <location>
        <position position="727"/>
    </location>
</feature>
<feature type="modified residue" description="Phosphothreonine" evidence="2">
    <location>
        <position position="732"/>
    </location>
</feature>
<feature type="glycosylation site" description="N-linked (GlcNAc...) asparagine" evidence="3">
    <location>
        <position position="142"/>
    </location>
</feature>
<feature type="glycosylation site" description="N-linked (GlcNAc...) asparagine" evidence="3">
    <location>
        <position position="233"/>
    </location>
</feature>
<feature type="glycosylation site" description="N-linked (GlcNAc...) asparagine" evidence="3">
    <location>
        <position position="261"/>
    </location>
</feature>
<feature type="glycosylation site" description="N-linked (GlcNAc...) asparagine" evidence="3">
    <location>
        <position position="295"/>
    </location>
</feature>
<feature type="glycosylation site" description="N-linked (GlcNAc...) asparagine" evidence="3">
    <location>
        <position position="405"/>
    </location>
</feature>
<feature type="glycosylation site" description="N-linked (GlcNAc...) asparagine" evidence="3">
    <location>
        <position position="420"/>
    </location>
</feature>